<dbReference type="EC" id="1.9.6.1" evidence="1"/>
<dbReference type="EMBL" id="CP000266">
    <property type="protein sequence ID" value="ABF04397.1"/>
    <property type="molecule type" value="Genomic_DNA"/>
</dbReference>
<dbReference type="RefSeq" id="WP_000778073.1">
    <property type="nucleotide sequence ID" value="NC_008258.1"/>
</dbReference>
<dbReference type="SMR" id="Q0T2R8"/>
<dbReference type="KEGG" id="sfv:SFV_2282"/>
<dbReference type="HOGENOM" id="CLU_000422_13_4_6"/>
<dbReference type="Proteomes" id="UP000000659">
    <property type="component" value="Chromosome"/>
</dbReference>
<dbReference type="GO" id="GO:0016020">
    <property type="term" value="C:membrane"/>
    <property type="evidence" value="ECO:0007669"/>
    <property type="project" value="TreeGrafter"/>
</dbReference>
<dbReference type="GO" id="GO:0009325">
    <property type="term" value="C:nitrate reductase complex"/>
    <property type="evidence" value="ECO:0007669"/>
    <property type="project" value="TreeGrafter"/>
</dbReference>
<dbReference type="GO" id="GO:0042597">
    <property type="term" value="C:periplasmic space"/>
    <property type="evidence" value="ECO:0007669"/>
    <property type="project" value="UniProtKB-SubCell"/>
</dbReference>
<dbReference type="GO" id="GO:0051539">
    <property type="term" value="F:4 iron, 4 sulfur cluster binding"/>
    <property type="evidence" value="ECO:0007669"/>
    <property type="project" value="UniProtKB-KW"/>
</dbReference>
<dbReference type="GO" id="GO:0009055">
    <property type="term" value="F:electron transfer activity"/>
    <property type="evidence" value="ECO:0007669"/>
    <property type="project" value="UniProtKB-UniRule"/>
</dbReference>
<dbReference type="GO" id="GO:0005506">
    <property type="term" value="F:iron ion binding"/>
    <property type="evidence" value="ECO:0007669"/>
    <property type="project" value="UniProtKB-UniRule"/>
</dbReference>
<dbReference type="GO" id="GO:0030151">
    <property type="term" value="F:molybdenum ion binding"/>
    <property type="evidence" value="ECO:0007669"/>
    <property type="project" value="InterPro"/>
</dbReference>
<dbReference type="GO" id="GO:0043546">
    <property type="term" value="F:molybdopterin cofactor binding"/>
    <property type="evidence" value="ECO:0007669"/>
    <property type="project" value="InterPro"/>
</dbReference>
<dbReference type="GO" id="GO:0050140">
    <property type="term" value="F:nitrate reductase (cytochrome) activity"/>
    <property type="evidence" value="ECO:0007669"/>
    <property type="project" value="UniProtKB-EC"/>
</dbReference>
<dbReference type="GO" id="GO:0045333">
    <property type="term" value="P:cellular respiration"/>
    <property type="evidence" value="ECO:0007669"/>
    <property type="project" value="UniProtKB-ARBA"/>
</dbReference>
<dbReference type="GO" id="GO:0006777">
    <property type="term" value="P:Mo-molybdopterin cofactor biosynthetic process"/>
    <property type="evidence" value="ECO:0007669"/>
    <property type="project" value="UniProtKB-UniRule"/>
</dbReference>
<dbReference type="GO" id="GO:0042128">
    <property type="term" value="P:nitrate assimilation"/>
    <property type="evidence" value="ECO:0007669"/>
    <property type="project" value="UniProtKB-UniRule"/>
</dbReference>
<dbReference type="CDD" id="cd02791">
    <property type="entry name" value="MopB_CT_Nitrate-R-NapA-like"/>
    <property type="match status" value="1"/>
</dbReference>
<dbReference type="CDD" id="cd02754">
    <property type="entry name" value="MopB_Nitrate-R-NapA-like"/>
    <property type="match status" value="1"/>
</dbReference>
<dbReference type="FunFam" id="2.40.40.20:FF:000005">
    <property type="entry name" value="Periplasmic nitrate reductase"/>
    <property type="match status" value="1"/>
</dbReference>
<dbReference type="FunFam" id="3.40.228.10:FF:000001">
    <property type="entry name" value="Periplasmic nitrate reductase"/>
    <property type="match status" value="1"/>
</dbReference>
<dbReference type="Gene3D" id="2.40.40.20">
    <property type="match status" value="1"/>
</dbReference>
<dbReference type="Gene3D" id="3.30.200.210">
    <property type="match status" value="1"/>
</dbReference>
<dbReference type="Gene3D" id="3.40.50.740">
    <property type="match status" value="1"/>
</dbReference>
<dbReference type="Gene3D" id="3.40.228.10">
    <property type="entry name" value="Dimethylsulfoxide Reductase, domain 2"/>
    <property type="match status" value="1"/>
</dbReference>
<dbReference type="HAMAP" id="MF_01630">
    <property type="entry name" value="Nitrate_reduct_NapA"/>
    <property type="match status" value="1"/>
</dbReference>
<dbReference type="InterPro" id="IPR009010">
    <property type="entry name" value="Asp_de-COase-like_dom_sf"/>
</dbReference>
<dbReference type="InterPro" id="IPR041957">
    <property type="entry name" value="CT_Nitrate-R-NapA-like"/>
</dbReference>
<dbReference type="InterPro" id="IPR006657">
    <property type="entry name" value="MoPterin_dinucl-bd_dom"/>
</dbReference>
<dbReference type="InterPro" id="IPR006656">
    <property type="entry name" value="Mopterin_OxRdtase"/>
</dbReference>
<dbReference type="InterPro" id="IPR006963">
    <property type="entry name" value="Mopterin_OxRdtase_4Fe-4S_dom"/>
</dbReference>
<dbReference type="InterPro" id="IPR027467">
    <property type="entry name" value="MopterinOxRdtase_cofactor_BS"/>
</dbReference>
<dbReference type="InterPro" id="IPR010051">
    <property type="entry name" value="Periplasm_NO3_reductase_lsu"/>
</dbReference>
<dbReference type="InterPro" id="IPR050123">
    <property type="entry name" value="Prok_molybdopt-oxidoreductase"/>
</dbReference>
<dbReference type="InterPro" id="IPR006311">
    <property type="entry name" value="TAT_signal"/>
</dbReference>
<dbReference type="InterPro" id="IPR019546">
    <property type="entry name" value="TAT_signal_bac_arc"/>
</dbReference>
<dbReference type="NCBIfam" id="TIGR01706">
    <property type="entry name" value="NAPA"/>
    <property type="match status" value="1"/>
</dbReference>
<dbReference type="NCBIfam" id="NF010055">
    <property type="entry name" value="PRK13532.1"/>
    <property type="match status" value="1"/>
</dbReference>
<dbReference type="NCBIfam" id="TIGR01409">
    <property type="entry name" value="TAT_signal_seq"/>
    <property type="match status" value="1"/>
</dbReference>
<dbReference type="PANTHER" id="PTHR43105:SF11">
    <property type="entry name" value="PERIPLASMIC NITRATE REDUCTASE"/>
    <property type="match status" value="1"/>
</dbReference>
<dbReference type="PANTHER" id="PTHR43105">
    <property type="entry name" value="RESPIRATORY NITRATE REDUCTASE"/>
    <property type="match status" value="1"/>
</dbReference>
<dbReference type="Pfam" id="PF04879">
    <property type="entry name" value="Molybdop_Fe4S4"/>
    <property type="match status" value="1"/>
</dbReference>
<dbReference type="Pfam" id="PF00384">
    <property type="entry name" value="Molybdopterin"/>
    <property type="match status" value="1"/>
</dbReference>
<dbReference type="Pfam" id="PF01568">
    <property type="entry name" value="Molydop_binding"/>
    <property type="match status" value="1"/>
</dbReference>
<dbReference type="SMART" id="SM00926">
    <property type="entry name" value="Molybdop_Fe4S4"/>
    <property type="match status" value="1"/>
</dbReference>
<dbReference type="SUPFAM" id="SSF50692">
    <property type="entry name" value="ADC-like"/>
    <property type="match status" value="1"/>
</dbReference>
<dbReference type="SUPFAM" id="SSF53706">
    <property type="entry name" value="Formate dehydrogenase/DMSO reductase, domains 1-3"/>
    <property type="match status" value="1"/>
</dbReference>
<dbReference type="PROSITE" id="PS51669">
    <property type="entry name" value="4FE4S_MOW_BIS_MGD"/>
    <property type="match status" value="1"/>
</dbReference>
<dbReference type="PROSITE" id="PS00551">
    <property type="entry name" value="MOLYBDOPTERIN_PROK_1"/>
    <property type="match status" value="1"/>
</dbReference>
<dbReference type="PROSITE" id="PS51318">
    <property type="entry name" value="TAT"/>
    <property type="match status" value="1"/>
</dbReference>
<organism>
    <name type="scientific">Shigella flexneri serotype 5b (strain 8401)</name>
    <dbReference type="NCBI Taxonomy" id="373384"/>
    <lineage>
        <taxon>Bacteria</taxon>
        <taxon>Pseudomonadati</taxon>
        <taxon>Pseudomonadota</taxon>
        <taxon>Gammaproteobacteria</taxon>
        <taxon>Enterobacterales</taxon>
        <taxon>Enterobacteriaceae</taxon>
        <taxon>Shigella</taxon>
    </lineage>
</organism>
<reference key="1">
    <citation type="journal article" date="2006" name="BMC Genomics">
        <title>Complete genome sequence of Shigella flexneri 5b and comparison with Shigella flexneri 2a.</title>
        <authorList>
            <person name="Nie H."/>
            <person name="Yang F."/>
            <person name="Zhang X."/>
            <person name="Yang J."/>
            <person name="Chen L."/>
            <person name="Wang J."/>
            <person name="Xiong Z."/>
            <person name="Peng J."/>
            <person name="Sun L."/>
            <person name="Dong J."/>
            <person name="Xue Y."/>
            <person name="Xu X."/>
            <person name="Chen S."/>
            <person name="Yao Z."/>
            <person name="Shen Y."/>
            <person name="Jin Q."/>
        </authorList>
    </citation>
    <scope>NUCLEOTIDE SEQUENCE [LARGE SCALE GENOMIC DNA]</scope>
    <source>
        <strain>8401</strain>
    </source>
</reference>
<protein>
    <recommendedName>
        <fullName evidence="1">Periplasmic nitrate reductase</fullName>
        <ecNumber evidence="1">1.9.6.1</ecNumber>
    </recommendedName>
</protein>
<feature type="signal peptide" description="Tat-type signal" evidence="1">
    <location>
        <begin position="1"/>
        <end position="31"/>
    </location>
</feature>
<feature type="chain" id="PRO_1000069725" description="Periplasmic nitrate reductase" evidence="1">
    <location>
        <begin position="32"/>
        <end position="828"/>
    </location>
</feature>
<feature type="domain" description="4Fe-4S Mo/W bis-MGD-type" evidence="1">
    <location>
        <begin position="39"/>
        <end position="95"/>
    </location>
</feature>
<feature type="binding site" evidence="1">
    <location>
        <position position="46"/>
    </location>
    <ligand>
        <name>[4Fe-4S] cluster</name>
        <dbReference type="ChEBI" id="CHEBI:49883"/>
    </ligand>
</feature>
<feature type="binding site" evidence="1">
    <location>
        <position position="49"/>
    </location>
    <ligand>
        <name>[4Fe-4S] cluster</name>
        <dbReference type="ChEBI" id="CHEBI:49883"/>
    </ligand>
</feature>
<feature type="binding site" evidence="1">
    <location>
        <position position="53"/>
    </location>
    <ligand>
        <name>[4Fe-4S] cluster</name>
        <dbReference type="ChEBI" id="CHEBI:49883"/>
    </ligand>
</feature>
<feature type="binding site" evidence="1">
    <location>
        <position position="81"/>
    </location>
    <ligand>
        <name>[4Fe-4S] cluster</name>
        <dbReference type="ChEBI" id="CHEBI:49883"/>
    </ligand>
</feature>
<feature type="binding site" evidence="1">
    <location>
        <position position="83"/>
    </location>
    <ligand>
        <name>Mo-bis(molybdopterin guanine dinucleotide)</name>
        <dbReference type="ChEBI" id="CHEBI:60539"/>
    </ligand>
</feature>
<feature type="binding site" evidence="1">
    <location>
        <position position="150"/>
    </location>
    <ligand>
        <name>Mo-bis(molybdopterin guanine dinucleotide)</name>
        <dbReference type="ChEBI" id="CHEBI:60539"/>
    </ligand>
</feature>
<feature type="binding site" evidence="1">
    <location>
        <position position="175"/>
    </location>
    <ligand>
        <name>Mo-bis(molybdopterin guanine dinucleotide)</name>
        <dbReference type="ChEBI" id="CHEBI:60539"/>
    </ligand>
</feature>
<feature type="binding site" evidence="1">
    <location>
        <position position="179"/>
    </location>
    <ligand>
        <name>Mo-bis(molybdopterin guanine dinucleotide)</name>
        <dbReference type="ChEBI" id="CHEBI:60539"/>
    </ligand>
</feature>
<feature type="binding site" evidence="1">
    <location>
        <begin position="212"/>
        <end position="219"/>
    </location>
    <ligand>
        <name>Mo-bis(molybdopterin guanine dinucleotide)</name>
        <dbReference type="ChEBI" id="CHEBI:60539"/>
    </ligand>
</feature>
<feature type="binding site" evidence="1">
    <location>
        <begin position="243"/>
        <end position="247"/>
    </location>
    <ligand>
        <name>Mo-bis(molybdopterin guanine dinucleotide)</name>
        <dbReference type="ChEBI" id="CHEBI:60539"/>
    </ligand>
</feature>
<feature type="binding site" evidence="1">
    <location>
        <begin position="262"/>
        <end position="264"/>
    </location>
    <ligand>
        <name>Mo-bis(molybdopterin guanine dinucleotide)</name>
        <dbReference type="ChEBI" id="CHEBI:60539"/>
    </ligand>
</feature>
<feature type="binding site" evidence="1">
    <location>
        <position position="372"/>
    </location>
    <ligand>
        <name>Mo-bis(molybdopterin guanine dinucleotide)</name>
        <dbReference type="ChEBI" id="CHEBI:60539"/>
    </ligand>
</feature>
<feature type="binding site" evidence="1">
    <location>
        <position position="376"/>
    </location>
    <ligand>
        <name>Mo-bis(molybdopterin guanine dinucleotide)</name>
        <dbReference type="ChEBI" id="CHEBI:60539"/>
    </ligand>
</feature>
<feature type="binding site" evidence="1">
    <location>
        <position position="482"/>
    </location>
    <ligand>
        <name>Mo-bis(molybdopterin guanine dinucleotide)</name>
        <dbReference type="ChEBI" id="CHEBI:60539"/>
    </ligand>
</feature>
<feature type="binding site" evidence="1">
    <location>
        <begin position="508"/>
        <end position="509"/>
    </location>
    <ligand>
        <name>Mo-bis(molybdopterin guanine dinucleotide)</name>
        <dbReference type="ChEBI" id="CHEBI:60539"/>
    </ligand>
</feature>
<feature type="binding site" evidence="1">
    <location>
        <position position="531"/>
    </location>
    <ligand>
        <name>Mo-bis(molybdopterin guanine dinucleotide)</name>
        <dbReference type="ChEBI" id="CHEBI:60539"/>
    </ligand>
</feature>
<feature type="binding site" evidence="1">
    <location>
        <position position="558"/>
    </location>
    <ligand>
        <name>Mo-bis(molybdopterin guanine dinucleotide)</name>
        <dbReference type="ChEBI" id="CHEBI:60539"/>
    </ligand>
</feature>
<feature type="binding site" evidence="1">
    <location>
        <begin position="718"/>
        <end position="727"/>
    </location>
    <ligand>
        <name>Mo-bis(molybdopterin guanine dinucleotide)</name>
        <dbReference type="ChEBI" id="CHEBI:60539"/>
    </ligand>
</feature>
<feature type="binding site" evidence="1">
    <location>
        <position position="794"/>
    </location>
    <ligand>
        <name>substrate</name>
    </ligand>
</feature>
<feature type="binding site" evidence="1">
    <location>
        <position position="802"/>
    </location>
    <ligand>
        <name>Mo-bis(molybdopterin guanine dinucleotide)</name>
        <dbReference type="ChEBI" id="CHEBI:60539"/>
    </ligand>
</feature>
<feature type="binding site" evidence="1">
    <location>
        <position position="819"/>
    </location>
    <ligand>
        <name>Mo-bis(molybdopterin guanine dinucleotide)</name>
        <dbReference type="ChEBI" id="CHEBI:60539"/>
    </ligand>
</feature>
<evidence type="ECO:0000255" key="1">
    <source>
        <dbReference type="HAMAP-Rule" id="MF_01630"/>
    </source>
</evidence>
<keyword id="KW-0004">4Fe-4S</keyword>
<keyword id="KW-0249">Electron transport</keyword>
<keyword id="KW-0408">Iron</keyword>
<keyword id="KW-0411">Iron-sulfur</keyword>
<keyword id="KW-0479">Metal-binding</keyword>
<keyword id="KW-0500">Molybdenum</keyword>
<keyword id="KW-0534">Nitrate assimilation</keyword>
<keyword id="KW-0560">Oxidoreductase</keyword>
<keyword id="KW-0574">Periplasm</keyword>
<keyword id="KW-0732">Signal</keyword>
<keyword id="KW-0813">Transport</keyword>
<name>NAPA_SHIF8</name>
<accession>Q0T2R8</accession>
<comment type="function">
    <text evidence="1">Catalytic subunit of the periplasmic nitrate reductase complex NapAB. Receives electrons from NapB and catalyzes the reduction of nitrate to nitrite.</text>
</comment>
<comment type="catalytic activity">
    <reaction evidence="1">
        <text>2 Fe(II)-[cytochrome] + nitrate + 2 H(+) = 2 Fe(III)-[cytochrome] + nitrite + H2O</text>
        <dbReference type="Rhea" id="RHEA:12909"/>
        <dbReference type="Rhea" id="RHEA-COMP:11777"/>
        <dbReference type="Rhea" id="RHEA-COMP:11778"/>
        <dbReference type="ChEBI" id="CHEBI:15377"/>
        <dbReference type="ChEBI" id="CHEBI:15378"/>
        <dbReference type="ChEBI" id="CHEBI:16301"/>
        <dbReference type="ChEBI" id="CHEBI:17632"/>
        <dbReference type="ChEBI" id="CHEBI:29033"/>
        <dbReference type="ChEBI" id="CHEBI:29034"/>
        <dbReference type="EC" id="1.9.6.1"/>
    </reaction>
</comment>
<comment type="cofactor">
    <cofactor evidence="1">
        <name>[4Fe-4S] cluster</name>
        <dbReference type="ChEBI" id="CHEBI:49883"/>
    </cofactor>
    <text evidence="1">Binds 1 [4Fe-4S] cluster.</text>
</comment>
<comment type="cofactor">
    <cofactor evidence="1">
        <name>Mo-bis(molybdopterin guanine dinucleotide)</name>
        <dbReference type="ChEBI" id="CHEBI:60539"/>
    </cofactor>
    <text evidence="1">Binds 1 molybdenum-bis(molybdopterin guanine dinucleotide) (Mo-bis-MGD) cofactor per subunit.</text>
</comment>
<comment type="subunit">
    <text evidence="1">Component of the periplasmic nitrate reductase NapAB complex composed of NapA and NapB.</text>
</comment>
<comment type="subcellular location">
    <subcellularLocation>
        <location evidence="1">Periplasm</location>
    </subcellularLocation>
</comment>
<comment type="PTM">
    <text evidence="1">Predicted to be exported by the Tat system. The position of the signal peptide cleavage has not been experimentally proven.</text>
</comment>
<comment type="similarity">
    <text evidence="1">Belongs to the prokaryotic molybdopterin-containing oxidoreductase family. NasA/NapA/NarB subfamily.</text>
</comment>
<proteinExistence type="inferred from homology"/>
<gene>
    <name evidence="1" type="primary">napA</name>
    <name type="ordered locus">SFV_2282</name>
</gene>
<sequence length="828" mass="92989">MKLSRRSFMKANAVAAAAAAAGLSVPGVARAVVGQQEAIKWDKAPCRFCGTGCGVLVGTQQGRVVACQGDPDAPVNRGLNCIKGYFLPKIMYGKDRLTQPLLRMKNGKYDKEGEFTPITWDQAFDVMEEKFKTALKEKGPESIGMFGSGQWTIWEGYAASKLFKAGFRSNNIDPNARHCMASAVVGFMRTFGMDEPMGCYDDIEQADAFVLWGANMAEMHPILWSRITNSRLSNQNVTVAVLSTYQHRSFELADNGIIFTPQSDLVILNYIANYIIQNNAINQDFFSKHVNLRKGATDIGYGLRPTHPLEKAAKNPGSDASEPMSFEDYKAFVAEYTLEKTAEMTGVPKDQLEQLAQLYADPNKKVISYWTMGFNQHTRGVWANNLVYNLHLLTGKISQPGCGPFSLTGQPSACGTAREVGTFAHRLPADMVVTNEKHRDICEKKWNIPSGTIPAKIGLHAVAQDRALKDGKLNVYWTMCTNNMQAGPNINEERMPGWRDPRNFIIVSDPYPTVSALAADLILPTAMWVEKEGAYGNAERRTQFWRQQVQAPGEAKSDLWQLVQFSRRFKTEEVWPEELLAKKPELRGKTLYEVLYATPEVSKFPVSELAEDQLNDESRELGFYRQKGLFEEYACFGRGHGHDLAPFDDYHKARVLRWPVVNGKETQWRYSEGNDPYVKAGEGYKFYGKPDGKAVIFALPFEPAAEAPDEEYDLWLSTGRVLEHWHTGSMTRRVPELHRAFPEAVLFIHPLDAKARDLRRGDKVKVVSRRGEVISIVETRGRNRPPQGLVYMPFFDAAQLVNKLTLDATDPLSKETDFKKCAVKLEKV</sequence>